<name>AHL3_ARATH</name>
<accession>Q9SB31</accession>
<keyword id="KW-0238">DNA-binding</keyword>
<keyword id="KW-0539">Nucleus</keyword>
<keyword id="KW-1185">Reference proteome</keyword>
<keyword id="KW-0804">Transcription</keyword>
<keyword id="KW-0805">Transcription regulation</keyword>
<reference key="1">
    <citation type="journal article" date="1999" name="Nature">
        <title>Sequence and analysis of chromosome 4 of the plant Arabidopsis thaliana.</title>
        <authorList>
            <person name="Mayer K.F.X."/>
            <person name="Schueller C."/>
            <person name="Wambutt R."/>
            <person name="Murphy G."/>
            <person name="Volckaert G."/>
            <person name="Pohl T."/>
            <person name="Duesterhoeft A."/>
            <person name="Stiekema W."/>
            <person name="Entian K.-D."/>
            <person name="Terryn N."/>
            <person name="Harris B."/>
            <person name="Ansorge W."/>
            <person name="Brandt P."/>
            <person name="Grivell L.A."/>
            <person name="Rieger M."/>
            <person name="Weichselgartner M."/>
            <person name="de Simone V."/>
            <person name="Obermaier B."/>
            <person name="Mache R."/>
            <person name="Mueller M."/>
            <person name="Kreis M."/>
            <person name="Delseny M."/>
            <person name="Puigdomenech P."/>
            <person name="Watson M."/>
            <person name="Schmidtheini T."/>
            <person name="Reichert B."/>
            <person name="Portetelle D."/>
            <person name="Perez-Alonso M."/>
            <person name="Boutry M."/>
            <person name="Bancroft I."/>
            <person name="Vos P."/>
            <person name="Hoheisel J."/>
            <person name="Zimmermann W."/>
            <person name="Wedler H."/>
            <person name="Ridley P."/>
            <person name="Langham S.-A."/>
            <person name="McCullagh B."/>
            <person name="Bilham L."/>
            <person name="Robben J."/>
            <person name="van der Schueren J."/>
            <person name="Grymonprez B."/>
            <person name="Chuang Y.-J."/>
            <person name="Vandenbussche F."/>
            <person name="Braeken M."/>
            <person name="Weltjens I."/>
            <person name="Voet M."/>
            <person name="Bastiaens I."/>
            <person name="Aert R."/>
            <person name="Defoor E."/>
            <person name="Weitzenegger T."/>
            <person name="Bothe G."/>
            <person name="Ramsperger U."/>
            <person name="Hilbert H."/>
            <person name="Braun M."/>
            <person name="Holzer E."/>
            <person name="Brandt A."/>
            <person name="Peters S."/>
            <person name="van Staveren M."/>
            <person name="Dirkse W."/>
            <person name="Mooijman P."/>
            <person name="Klein Lankhorst R."/>
            <person name="Rose M."/>
            <person name="Hauf J."/>
            <person name="Koetter P."/>
            <person name="Berneiser S."/>
            <person name="Hempel S."/>
            <person name="Feldpausch M."/>
            <person name="Lamberth S."/>
            <person name="Van den Daele H."/>
            <person name="De Keyser A."/>
            <person name="Buysshaert C."/>
            <person name="Gielen J."/>
            <person name="Villarroel R."/>
            <person name="De Clercq R."/>
            <person name="van Montagu M."/>
            <person name="Rogers J."/>
            <person name="Cronin A."/>
            <person name="Quail M.A."/>
            <person name="Bray-Allen S."/>
            <person name="Clark L."/>
            <person name="Doggett J."/>
            <person name="Hall S."/>
            <person name="Kay M."/>
            <person name="Lennard N."/>
            <person name="McLay K."/>
            <person name="Mayes R."/>
            <person name="Pettett A."/>
            <person name="Rajandream M.A."/>
            <person name="Lyne M."/>
            <person name="Benes V."/>
            <person name="Rechmann S."/>
            <person name="Borkova D."/>
            <person name="Bloecker H."/>
            <person name="Scharfe M."/>
            <person name="Grimm M."/>
            <person name="Loehnert T.-H."/>
            <person name="Dose S."/>
            <person name="de Haan M."/>
            <person name="Maarse A.C."/>
            <person name="Schaefer M."/>
            <person name="Mueller-Auer S."/>
            <person name="Gabel C."/>
            <person name="Fuchs M."/>
            <person name="Fartmann B."/>
            <person name="Granderath K."/>
            <person name="Dauner D."/>
            <person name="Herzl A."/>
            <person name="Neumann S."/>
            <person name="Argiriou A."/>
            <person name="Vitale D."/>
            <person name="Liguori R."/>
            <person name="Piravandi E."/>
            <person name="Massenet O."/>
            <person name="Quigley F."/>
            <person name="Clabauld G."/>
            <person name="Muendlein A."/>
            <person name="Felber R."/>
            <person name="Schnabl S."/>
            <person name="Hiller R."/>
            <person name="Schmidt W."/>
            <person name="Lecharny A."/>
            <person name="Aubourg S."/>
            <person name="Chefdor F."/>
            <person name="Cooke R."/>
            <person name="Berger C."/>
            <person name="Monfort A."/>
            <person name="Casacuberta E."/>
            <person name="Gibbons T."/>
            <person name="Weber N."/>
            <person name="Vandenbol M."/>
            <person name="Bargues M."/>
            <person name="Terol J."/>
            <person name="Torres A."/>
            <person name="Perez-Perez A."/>
            <person name="Purnelle B."/>
            <person name="Bent E."/>
            <person name="Johnson S."/>
            <person name="Tacon D."/>
            <person name="Jesse T."/>
            <person name="Heijnen L."/>
            <person name="Schwarz S."/>
            <person name="Scholler P."/>
            <person name="Heber S."/>
            <person name="Francs P."/>
            <person name="Bielke C."/>
            <person name="Frishman D."/>
            <person name="Haase D."/>
            <person name="Lemcke K."/>
            <person name="Mewes H.-W."/>
            <person name="Stocker S."/>
            <person name="Zaccaria P."/>
            <person name="Bevan M."/>
            <person name="Wilson R.K."/>
            <person name="de la Bastide M."/>
            <person name="Habermann K."/>
            <person name="Parnell L."/>
            <person name="Dedhia N."/>
            <person name="Gnoj L."/>
            <person name="Schutz K."/>
            <person name="Huang E."/>
            <person name="Spiegel L."/>
            <person name="Sekhon M."/>
            <person name="Murray J."/>
            <person name="Sheet P."/>
            <person name="Cordes M."/>
            <person name="Abu-Threideh J."/>
            <person name="Stoneking T."/>
            <person name="Kalicki J."/>
            <person name="Graves T."/>
            <person name="Harmon G."/>
            <person name="Edwards J."/>
            <person name="Latreille P."/>
            <person name="Courtney L."/>
            <person name="Cloud J."/>
            <person name="Abbott A."/>
            <person name="Scott K."/>
            <person name="Johnson D."/>
            <person name="Minx P."/>
            <person name="Bentley D."/>
            <person name="Fulton B."/>
            <person name="Miller N."/>
            <person name="Greco T."/>
            <person name="Kemp K."/>
            <person name="Kramer J."/>
            <person name="Fulton L."/>
            <person name="Mardis E."/>
            <person name="Dante M."/>
            <person name="Pepin K."/>
            <person name="Hillier L.W."/>
            <person name="Nelson J."/>
            <person name="Spieth J."/>
            <person name="Ryan E."/>
            <person name="Andrews S."/>
            <person name="Geisel C."/>
            <person name="Layman D."/>
            <person name="Du H."/>
            <person name="Ali J."/>
            <person name="Berghoff A."/>
            <person name="Jones K."/>
            <person name="Drone K."/>
            <person name="Cotton M."/>
            <person name="Joshu C."/>
            <person name="Antonoiu B."/>
            <person name="Zidanic M."/>
            <person name="Strong C."/>
            <person name="Sun H."/>
            <person name="Lamar B."/>
            <person name="Yordan C."/>
            <person name="Ma P."/>
            <person name="Zhong J."/>
            <person name="Preston R."/>
            <person name="Vil D."/>
            <person name="Shekher M."/>
            <person name="Matero A."/>
            <person name="Shah R."/>
            <person name="Swaby I.K."/>
            <person name="O'Shaughnessy A."/>
            <person name="Rodriguez M."/>
            <person name="Hoffman J."/>
            <person name="Till S."/>
            <person name="Granat S."/>
            <person name="Shohdy N."/>
            <person name="Hasegawa A."/>
            <person name="Hameed A."/>
            <person name="Lodhi M."/>
            <person name="Johnson A."/>
            <person name="Chen E."/>
            <person name="Marra M.A."/>
            <person name="Martienssen R."/>
            <person name="McCombie W.R."/>
        </authorList>
    </citation>
    <scope>NUCLEOTIDE SEQUENCE [LARGE SCALE GENOMIC DNA]</scope>
    <source>
        <strain>cv. Columbia</strain>
    </source>
</reference>
<reference key="2">
    <citation type="journal article" date="2017" name="Plant J.">
        <title>Araport11: a complete reannotation of the Arabidopsis thaliana reference genome.</title>
        <authorList>
            <person name="Cheng C.Y."/>
            <person name="Krishnakumar V."/>
            <person name="Chan A.P."/>
            <person name="Thibaud-Nissen F."/>
            <person name="Schobel S."/>
            <person name="Town C.D."/>
        </authorList>
    </citation>
    <scope>GENOME REANNOTATION</scope>
    <source>
        <strain>cv. Columbia</strain>
    </source>
</reference>
<reference key="3">
    <citation type="journal article" date="2003" name="Science">
        <title>Empirical analysis of transcriptional activity in the Arabidopsis genome.</title>
        <authorList>
            <person name="Yamada K."/>
            <person name="Lim J."/>
            <person name="Dale J.M."/>
            <person name="Chen H."/>
            <person name="Shinn P."/>
            <person name="Palm C.J."/>
            <person name="Southwick A.M."/>
            <person name="Wu H.C."/>
            <person name="Kim C.J."/>
            <person name="Nguyen M."/>
            <person name="Pham P.K."/>
            <person name="Cheuk R.F."/>
            <person name="Karlin-Newmann G."/>
            <person name="Liu S.X."/>
            <person name="Lam B."/>
            <person name="Sakano H."/>
            <person name="Wu T."/>
            <person name="Yu G."/>
            <person name="Miranda M."/>
            <person name="Quach H.L."/>
            <person name="Tripp M."/>
            <person name="Chang C.H."/>
            <person name="Lee J.M."/>
            <person name="Toriumi M.J."/>
            <person name="Chan M.M."/>
            <person name="Tang C.C."/>
            <person name="Onodera C.S."/>
            <person name="Deng J.M."/>
            <person name="Akiyama K."/>
            <person name="Ansari Y."/>
            <person name="Arakawa T."/>
            <person name="Banh J."/>
            <person name="Banno F."/>
            <person name="Bowser L."/>
            <person name="Brooks S.Y."/>
            <person name="Carninci P."/>
            <person name="Chao Q."/>
            <person name="Choy N."/>
            <person name="Enju A."/>
            <person name="Goldsmith A.D."/>
            <person name="Gurjal M."/>
            <person name="Hansen N.F."/>
            <person name="Hayashizaki Y."/>
            <person name="Johnson-Hopson C."/>
            <person name="Hsuan V.W."/>
            <person name="Iida K."/>
            <person name="Karnes M."/>
            <person name="Khan S."/>
            <person name="Koesema E."/>
            <person name="Ishida J."/>
            <person name="Jiang P.X."/>
            <person name="Jones T."/>
            <person name="Kawai J."/>
            <person name="Kamiya A."/>
            <person name="Meyers C."/>
            <person name="Nakajima M."/>
            <person name="Narusaka M."/>
            <person name="Seki M."/>
            <person name="Sakurai T."/>
            <person name="Satou M."/>
            <person name="Tamse R."/>
            <person name="Vaysberg M."/>
            <person name="Wallender E.K."/>
            <person name="Wong C."/>
            <person name="Yamamura Y."/>
            <person name="Yuan S."/>
            <person name="Shinozaki K."/>
            <person name="Davis R.W."/>
            <person name="Theologis A."/>
            <person name="Ecker J.R."/>
        </authorList>
    </citation>
    <scope>NUCLEOTIDE SEQUENCE [LARGE SCALE MRNA]</scope>
    <source>
        <strain>cv. Columbia</strain>
    </source>
</reference>
<reference key="4">
    <citation type="journal article" date="2004" name="Plant Mol. Biol.">
        <title>Identification of a novel plant MAR DNA binding protein localized on chromosomal surfaces.</title>
        <authorList>
            <person name="Fujimoto S."/>
            <person name="Matsunaga S."/>
            <person name="Yonemura M."/>
            <person name="Uchiyama S."/>
            <person name="Azuma T."/>
            <person name="Fukui K."/>
        </authorList>
    </citation>
    <scope>IDENTIFICATION</scope>
    <scope>GENE FAMILY</scope>
    <scope>NOMENCLATURE</scope>
    <source>
        <strain>cv. Columbia</strain>
    </source>
</reference>
<reference key="5">
    <citation type="journal article" date="2013" name="Plant Cell">
        <title>Cell-to-cell movement of two interacting AT-hook factors in Arabidopsis root vascular tissue patterning.</title>
        <authorList>
            <person name="Zhou J."/>
            <person name="Wang X."/>
            <person name="Lee J.Y."/>
            <person name="Lee J.Y."/>
        </authorList>
    </citation>
    <scope>FUNCTION</scope>
    <scope>DISRUPTION PHENOTYPE</scope>
    <scope>INTERACTION WITH AHL4</scope>
    <scope>SUBCELLULAR LOCATION</scope>
    <scope>TISSUE SPECIFICITY</scope>
</reference>
<reference key="6">
    <citation type="journal article" date="2013" name="Proc. Natl. Acad. Sci. U.S.A.">
        <title>Arabidopsis thaliana AHL family modulates hypocotyl growth redundantly by interacting with each other via the PPC/DUF296 domain.</title>
        <authorList>
            <person name="Zhao J."/>
            <person name="Favero D.S."/>
            <person name="Peng H."/>
            <person name="Neff M.M."/>
        </authorList>
    </citation>
    <scope>GENE FAMILY</scope>
    <scope>DOMAIN PPC</scope>
</reference>
<protein>
    <recommendedName>
        <fullName evidence="11">AT-hook motif nuclear-localized protein 3</fullName>
    </recommendedName>
</protein>
<gene>
    <name evidence="7" type="primary">AHL3</name>
    <name evidence="9" type="ordered locus">At4g25320</name>
    <name evidence="10" type="ORF">F24A6.160</name>
</gene>
<proteinExistence type="evidence at protein level"/>
<comment type="function">
    <text evidence="1 5">Transcription factor that specifically binds AT-rich DNA sequences related to the nuclear matrix attachment regions (MARs) (By similarity). Acts redundantly with AHL4 to regulate the formation of tissue boundary between the xylem and procambium in the root meristem (PubMed:23335615).</text>
</comment>
<comment type="subunit">
    <text evidence="5">Homodimer. Interacts with AHL4.</text>
</comment>
<comment type="subcellular location">
    <subcellularLocation>
        <location evidence="5">Nucleus</location>
    </subcellularLocation>
</comment>
<comment type="tissue specificity">
    <text evidence="5">Expressed in both procambium and xylem precursors of the root meristem. Also detected in the endodermis in the late elongation zone and onwards.</text>
</comment>
<comment type="domain">
    <text evidence="6">The PPC domain mediates interactions between AHL proteins.</text>
</comment>
<comment type="disruption phenotype">
    <text evidence="5">Misspecification of tissue boundaries between the xylem and procambium.</text>
</comment>
<dbReference type="EMBL" id="AL035396">
    <property type="protein sequence ID" value="CAA23073.1"/>
    <property type="molecule type" value="Genomic_DNA"/>
</dbReference>
<dbReference type="EMBL" id="AL161563">
    <property type="protein sequence ID" value="CAB81343.1"/>
    <property type="molecule type" value="Genomic_DNA"/>
</dbReference>
<dbReference type="EMBL" id="CP002687">
    <property type="protein sequence ID" value="AEE85041.1"/>
    <property type="molecule type" value="Genomic_DNA"/>
</dbReference>
<dbReference type="EMBL" id="AY099572">
    <property type="protein sequence ID" value="AAM20424.1"/>
    <property type="molecule type" value="mRNA"/>
</dbReference>
<dbReference type="EMBL" id="BT003408">
    <property type="protein sequence ID" value="AAO30071.1"/>
    <property type="molecule type" value="mRNA"/>
</dbReference>
<dbReference type="EMBL" id="BR000339">
    <property type="protein sequence ID" value="FAA00274.1"/>
    <property type="molecule type" value="mRNA"/>
</dbReference>
<dbReference type="PIR" id="T05553">
    <property type="entry name" value="T05553"/>
</dbReference>
<dbReference type="RefSeq" id="NP_194262.1">
    <property type="nucleotide sequence ID" value="NM_118664.4"/>
</dbReference>
<dbReference type="SMR" id="Q9SB31"/>
<dbReference type="FunCoup" id="Q9SB31">
    <property type="interactions" value="327"/>
</dbReference>
<dbReference type="IntAct" id="Q9SB31">
    <property type="interactions" value="2"/>
</dbReference>
<dbReference type="STRING" id="3702.Q9SB31"/>
<dbReference type="PaxDb" id="3702-AT4G25320.1"/>
<dbReference type="ProteomicsDB" id="244801"/>
<dbReference type="EnsemblPlants" id="AT4G25320.1">
    <property type="protein sequence ID" value="AT4G25320.1"/>
    <property type="gene ID" value="AT4G25320"/>
</dbReference>
<dbReference type="GeneID" id="828635"/>
<dbReference type="Gramene" id="AT4G25320.1">
    <property type="protein sequence ID" value="AT4G25320.1"/>
    <property type="gene ID" value="AT4G25320"/>
</dbReference>
<dbReference type="KEGG" id="ath:AT4G25320"/>
<dbReference type="Araport" id="AT4G25320"/>
<dbReference type="TAIR" id="AT4G25320">
    <property type="gene designation" value="AHL3"/>
</dbReference>
<dbReference type="eggNOG" id="ENOG502QTAR">
    <property type="taxonomic scope" value="Eukaryota"/>
</dbReference>
<dbReference type="HOGENOM" id="CLU_039808_0_0_1"/>
<dbReference type="InParanoid" id="Q9SB31"/>
<dbReference type="OMA" id="RGKSNRW"/>
<dbReference type="PhylomeDB" id="Q9SB31"/>
<dbReference type="PRO" id="PR:Q9SB31"/>
<dbReference type="Proteomes" id="UP000006548">
    <property type="component" value="Chromosome 4"/>
</dbReference>
<dbReference type="ExpressionAtlas" id="Q9SB31">
    <property type="expression patterns" value="baseline and differential"/>
</dbReference>
<dbReference type="GO" id="GO:0005634">
    <property type="term" value="C:nucleus"/>
    <property type="evidence" value="ECO:0000314"/>
    <property type="project" value="TAIR"/>
</dbReference>
<dbReference type="GO" id="GO:0003680">
    <property type="term" value="F:minor groove of adenine-thymine-rich DNA binding"/>
    <property type="evidence" value="ECO:0007669"/>
    <property type="project" value="InterPro"/>
</dbReference>
<dbReference type="GO" id="GO:0010051">
    <property type="term" value="P:xylem and phloem pattern formation"/>
    <property type="evidence" value="ECO:0000315"/>
    <property type="project" value="UniProtKB"/>
</dbReference>
<dbReference type="GO" id="GO:0010089">
    <property type="term" value="P:xylem development"/>
    <property type="evidence" value="ECO:0000315"/>
    <property type="project" value="TAIR"/>
</dbReference>
<dbReference type="CDD" id="cd11378">
    <property type="entry name" value="DUF296"/>
    <property type="match status" value="1"/>
</dbReference>
<dbReference type="FunFam" id="3.30.1330.80:FF:000003">
    <property type="entry name" value="AT-hook motif nuclear-localized protein 1-like"/>
    <property type="match status" value="1"/>
</dbReference>
<dbReference type="Gene3D" id="3.30.1330.80">
    <property type="entry name" value="Hypothetical protein, similar to alpha- acetolactate decarboxylase, domain 2"/>
    <property type="match status" value="1"/>
</dbReference>
<dbReference type="InterPro" id="IPR039605">
    <property type="entry name" value="AHL"/>
</dbReference>
<dbReference type="InterPro" id="IPR005175">
    <property type="entry name" value="PPC_dom"/>
</dbReference>
<dbReference type="PANTHER" id="PTHR31500:SF18">
    <property type="entry name" value="AT-HOOK MOTIF NUCLEAR-LOCALIZED PROTEIN 3"/>
    <property type="match status" value="1"/>
</dbReference>
<dbReference type="PANTHER" id="PTHR31500">
    <property type="entry name" value="AT-HOOK MOTIF NUCLEAR-LOCALIZED PROTEIN 9"/>
    <property type="match status" value="1"/>
</dbReference>
<dbReference type="Pfam" id="PF03479">
    <property type="entry name" value="PCC"/>
    <property type="match status" value="1"/>
</dbReference>
<dbReference type="SUPFAM" id="SSF117856">
    <property type="entry name" value="AF0104/ALDC/Ptd012-like"/>
    <property type="match status" value="1"/>
</dbReference>
<dbReference type="PROSITE" id="PS51742">
    <property type="entry name" value="PPC"/>
    <property type="match status" value="1"/>
</dbReference>
<evidence type="ECO:0000250" key="1">
    <source>
        <dbReference type="UniProtKB" id="Q8VYJ2"/>
    </source>
</evidence>
<evidence type="ECO:0000255" key="2"/>
<evidence type="ECO:0000255" key="3">
    <source>
        <dbReference type="PROSITE-ProRule" id="PRU01078"/>
    </source>
</evidence>
<evidence type="ECO:0000256" key="4">
    <source>
        <dbReference type="SAM" id="MobiDB-lite"/>
    </source>
</evidence>
<evidence type="ECO:0000269" key="5">
    <source>
    </source>
</evidence>
<evidence type="ECO:0000269" key="6">
    <source>
    </source>
</evidence>
<evidence type="ECO:0000303" key="7">
    <source>
    </source>
</evidence>
<evidence type="ECO:0000305" key="8"/>
<evidence type="ECO:0000312" key="9">
    <source>
        <dbReference type="Araport" id="AT4G25320"/>
    </source>
</evidence>
<evidence type="ECO:0000312" key="10">
    <source>
        <dbReference type="EMBL" id="CAA23073.1"/>
    </source>
</evidence>
<evidence type="ECO:0000312" key="11">
    <source>
        <dbReference type="EMBL" id="FAA00274.1"/>
    </source>
</evidence>
<sequence length="404" mass="43014">MEEREGTNINNNITSSFGLKQQHEAAASDGGYSMDPPPRPENPNPFLVPPTTVPAAATVAAAVTENAATPFSLTMPTENTSAEQLKKKRGRPRKYNPDGTLVVTLSPMPISSSVPLTSEFPPRKRGRGRGKSNRWLKKSQMFQFDRSPVDTNLAGVGTADFVGANFTPHVLIVNAGEDVTMKIMTFSQQGSRAICILSANGPISNVTLRQSMTSGGTLTYEGRFEILSLTGSFMQNDSGGTRSRAGGMSVCLAGPDGRVFGGGLAGLFLAAGPVQVMVGTFIAGQEQSQLELAKERRLRFGAQPSSISFNISAEERKARFERLNKSVAIPAPTTSYTHVNTTNAVHSYYTNSVNHVKDPFSSIPVGGGGGGEVGEEEGEEDDDELEGEDEEFGGDSQSDNEIPS</sequence>
<feature type="chain" id="PRO_0000432021" description="AT-hook motif nuclear-localized protein 3">
    <location>
        <begin position="1"/>
        <end position="404"/>
    </location>
</feature>
<feature type="domain" description="PPC" evidence="3">
    <location>
        <begin position="163"/>
        <end position="308"/>
    </location>
</feature>
<feature type="DNA-binding region" description="A.T hook" evidence="2">
    <location>
        <begin position="86"/>
        <end position="98"/>
    </location>
</feature>
<feature type="region of interest" description="Disordered" evidence="4">
    <location>
        <begin position="1"/>
        <end position="51"/>
    </location>
</feature>
<feature type="region of interest" description="Disordered" evidence="4">
    <location>
        <begin position="70"/>
        <end position="100"/>
    </location>
</feature>
<feature type="region of interest" description="Disordered" evidence="4">
    <location>
        <begin position="113"/>
        <end position="133"/>
    </location>
</feature>
<feature type="region of interest" description="Disordered" evidence="4">
    <location>
        <begin position="359"/>
        <end position="404"/>
    </location>
</feature>
<feature type="short sequence motif" description="Bipartite nuclear localization signal" evidence="8">
    <location>
        <begin position="86"/>
        <end position="94"/>
    </location>
</feature>
<feature type="compositionally biased region" description="Polar residues" evidence="4">
    <location>
        <begin position="7"/>
        <end position="19"/>
    </location>
</feature>
<feature type="compositionally biased region" description="Pro residues" evidence="4">
    <location>
        <begin position="35"/>
        <end position="51"/>
    </location>
</feature>
<feature type="compositionally biased region" description="Polar residues" evidence="4">
    <location>
        <begin position="71"/>
        <end position="83"/>
    </location>
</feature>
<feature type="compositionally biased region" description="Basic residues" evidence="4">
    <location>
        <begin position="123"/>
        <end position="133"/>
    </location>
</feature>
<feature type="compositionally biased region" description="Acidic residues" evidence="4">
    <location>
        <begin position="373"/>
        <end position="393"/>
    </location>
</feature>
<organism>
    <name type="scientific">Arabidopsis thaliana</name>
    <name type="common">Mouse-ear cress</name>
    <dbReference type="NCBI Taxonomy" id="3702"/>
    <lineage>
        <taxon>Eukaryota</taxon>
        <taxon>Viridiplantae</taxon>
        <taxon>Streptophyta</taxon>
        <taxon>Embryophyta</taxon>
        <taxon>Tracheophyta</taxon>
        <taxon>Spermatophyta</taxon>
        <taxon>Magnoliopsida</taxon>
        <taxon>eudicotyledons</taxon>
        <taxon>Gunneridae</taxon>
        <taxon>Pentapetalae</taxon>
        <taxon>rosids</taxon>
        <taxon>malvids</taxon>
        <taxon>Brassicales</taxon>
        <taxon>Brassicaceae</taxon>
        <taxon>Camelineae</taxon>
        <taxon>Arabidopsis</taxon>
    </lineage>
</organism>